<organism>
    <name type="scientific">Homo sapiens</name>
    <name type="common">Human</name>
    <dbReference type="NCBI Taxonomy" id="9606"/>
    <lineage>
        <taxon>Eukaryota</taxon>
        <taxon>Metazoa</taxon>
        <taxon>Chordata</taxon>
        <taxon>Craniata</taxon>
        <taxon>Vertebrata</taxon>
        <taxon>Euteleostomi</taxon>
        <taxon>Mammalia</taxon>
        <taxon>Eutheria</taxon>
        <taxon>Euarchontoglires</taxon>
        <taxon>Primates</taxon>
        <taxon>Haplorrhini</taxon>
        <taxon>Catarrhini</taxon>
        <taxon>Hominidae</taxon>
        <taxon>Homo</taxon>
    </lineage>
</organism>
<protein>
    <recommendedName>
        <fullName evidence="1">Lipoyl synthase, mitochondrial</fullName>
        <ecNumber evidence="1">2.8.1.8</ecNumber>
    </recommendedName>
    <alternativeName>
        <fullName evidence="1">Lipoate synthase</fullName>
        <shortName evidence="1">LS</shortName>
        <shortName evidence="1">Lip-syn</shortName>
    </alternativeName>
    <alternativeName>
        <fullName evidence="1">Lipoic acid synthase</fullName>
    </alternativeName>
</protein>
<evidence type="ECO:0000255" key="1">
    <source>
        <dbReference type="HAMAP-Rule" id="MF_03123"/>
    </source>
</evidence>
<evidence type="ECO:0000255" key="2">
    <source>
        <dbReference type="PROSITE-ProRule" id="PRU01266"/>
    </source>
</evidence>
<evidence type="ECO:0000269" key="3">
    <source>
    </source>
</evidence>
<evidence type="ECO:0000305" key="4"/>
<accession>O43766</accession>
<accession>A8K873</accession>
<accession>C9JCF6</accession>
<accession>Q8IV62</accession>
<reference key="1">
    <citation type="journal article" date="2004" name="Nat. Genet.">
        <title>Complete sequencing and characterization of 21,243 full-length human cDNAs.</title>
        <authorList>
            <person name="Ota T."/>
            <person name="Suzuki Y."/>
            <person name="Nishikawa T."/>
            <person name="Otsuki T."/>
            <person name="Sugiyama T."/>
            <person name="Irie R."/>
            <person name="Wakamatsu A."/>
            <person name="Hayashi K."/>
            <person name="Sato H."/>
            <person name="Nagai K."/>
            <person name="Kimura K."/>
            <person name="Makita H."/>
            <person name="Sekine M."/>
            <person name="Obayashi M."/>
            <person name="Nishi T."/>
            <person name="Shibahara T."/>
            <person name="Tanaka T."/>
            <person name="Ishii S."/>
            <person name="Yamamoto J."/>
            <person name="Saito K."/>
            <person name="Kawai Y."/>
            <person name="Isono Y."/>
            <person name="Nakamura Y."/>
            <person name="Nagahari K."/>
            <person name="Murakami K."/>
            <person name="Yasuda T."/>
            <person name="Iwayanagi T."/>
            <person name="Wagatsuma M."/>
            <person name="Shiratori A."/>
            <person name="Sudo H."/>
            <person name="Hosoiri T."/>
            <person name="Kaku Y."/>
            <person name="Kodaira H."/>
            <person name="Kondo H."/>
            <person name="Sugawara M."/>
            <person name="Takahashi M."/>
            <person name="Kanda K."/>
            <person name="Yokoi T."/>
            <person name="Furuya T."/>
            <person name="Kikkawa E."/>
            <person name="Omura Y."/>
            <person name="Abe K."/>
            <person name="Kamihara K."/>
            <person name="Katsuta N."/>
            <person name="Sato K."/>
            <person name="Tanikawa M."/>
            <person name="Yamazaki M."/>
            <person name="Ninomiya K."/>
            <person name="Ishibashi T."/>
            <person name="Yamashita H."/>
            <person name="Murakawa K."/>
            <person name="Fujimori K."/>
            <person name="Tanai H."/>
            <person name="Kimata M."/>
            <person name="Watanabe M."/>
            <person name="Hiraoka S."/>
            <person name="Chiba Y."/>
            <person name="Ishida S."/>
            <person name="Ono Y."/>
            <person name="Takiguchi S."/>
            <person name="Watanabe S."/>
            <person name="Yosida M."/>
            <person name="Hotuta T."/>
            <person name="Kusano J."/>
            <person name="Kanehori K."/>
            <person name="Takahashi-Fujii A."/>
            <person name="Hara H."/>
            <person name="Tanase T.-O."/>
            <person name="Nomura Y."/>
            <person name="Togiya S."/>
            <person name="Komai F."/>
            <person name="Hara R."/>
            <person name="Takeuchi K."/>
            <person name="Arita M."/>
            <person name="Imose N."/>
            <person name="Musashino K."/>
            <person name="Yuuki H."/>
            <person name="Oshima A."/>
            <person name="Sasaki N."/>
            <person name="Aotsuka S."/>
            <person name="Yoshikawa Y."/>
            <person name="Matsunawa H."/>
            <person name="Ichihara T."/>
            <person name="Shiohata N."/>
            <person name="Sano S."/>
            <person name="Moriya S."/>
            <person name="Momiyama H."/>
            <person name="Satoh N."/>
            <person name="Takami S."/>
            <person name="Terashima Y."/>
            <person name="Suzuki O."/>
            <person name="Nakagawa S."/>
            <person name="Senoh A."/>
            <person name="Mizoguchi H."/>
            <person name="Goto Y."/>
            <person name="Shimizu F."/>
            <person name="Wakebe H."/>
            <person name="Hishigaki H."/>
            <person name="Watanabe T."/>
            <person name="Sugiyama A."/>
            <person name="Takemoto M."/>
            <person name="Kawakami B."/>
            <person name="Yamazaki M."/>
            <person name="Watanabe K."/>
            <person name="Kumagai A."/>
            <person name="Itakura S."/>
            <person name="Fukuzumi Y."/>
            <person name="Fujimori Y."/>
            <person name="Komiyama M."/>
            <person name="Tashiro H."/>
            <person name="Tanigami A."/>
            <person name="Fujiwara T."/>
            <person name="Ono T."/>
            <person name="Yamada K."/>
            <person name="Fujii Y."/>
            <person name="Ozaki K."/>
            <person name="Hirao M."/>
            <person name="Ohmori Y."/>
            <person name="Kawabata A."/>
            <person name="Hikiji T."/>
            <person name="Kobatake N."/>
            <person name="Inagaki H."/>
            <person name="Ikema Y."/>
            <person name="Okamoto S."/>
            <person name="Okitani R."/>
            <person name="Kawakami T."/>
            <person name="Noguchi S."/>
            <person name="Itoh T."/>
            <person name="Shigeta K."/>
            <person name="Senba T."/>
            <person name="Matsumura K."/>
            <person name="Nakajima Y."/>
            <person name="Mizuno T."/>
            <person name="Morinaga M."/>
            <person name="Sasaki M."/>
            <person name="Togashi T."/>
            <person name="Oyama M."/>
            <person name="Hata H."/>
            <person name="Watanabe M."/>
            <person name="Komatsu T."/>
            <person name="Mizushima-Sugano J."/>
            <person name="Satoh T."/>
            <person name="Shirai Y."/>
            <person name="Takahashi Y."/>
            <person name="Nakagawa K."/>
            <person name="Okumura K."/>
            <person name="Nagase T."/>
            <person name="Nomura N."/>
            <person name="Kikuchi H."/>
            <person name="Masuho Y."/>
            <person name="Yamashita R."/>
            <person name="Nakai K."/>
            <person name="Yada T."/>
            <person name="Nakamura Y."/>
            <person name="Ohara O."/>
            <person name="Isogai T."/>
            <person name="Sugano S."/>
        </authorList>
    </citation>
    <scope>NUCLEOTIDE SEQUENCE [LARGE SCALE MRNA] (ISOFORM 1)</scope>
    <source>
        <tissue>Testis</tissue>
    </source>
</reference>
<reference key="2">
    <citation type="journal article" date="2005" name="Nature">
        <title>Generation and annotation of the DNA sequences of human chromosomes 2 and 4.</title>
        <authorList>
            <person name="Hillier L.W."/>
            <person name="Graves T.A."/>
            <person name="Fulton R.S."/>
            <person name="Fulton L.A."/>
            <person name="Pepin K.H."/>
            <person name="Minx P."/>
            <person name="Wagner-McPherson C."/>
            <person name="Layman D."/>
            <person name="Wylie K."/>
            <person name="Sekhon M."/>
            <person name="Becker M.C."/>
            <person name="Fewell G.A."/>
            <person name="Delehaunty K.D."/>
            <person name="Miner T.L."/>
            <person name="Nash W.E."/>
            <person name="Kremitzki C."/>
            <person name="Oddy L."/>
            <person name="Du H."/>
            <person name="Sun H."/>
            <person name="Bradshaw-Cordum H."/>
            <person name="Ali J."/>
            <person name="Carter J."/>
            <person name="Cordes M."/>
            <person name="Harris A."/>
            <person name="Isak A."/>
            <person name="van Brunt A."/>
            <person name="Nguyen C."/>
            <person name="Du F."/>
            <person name="Courtney L."/>
            <person name="Kalicki J."/>
            <person name="Ozersky P."/>
            <person name="Abbott S."/>
            <person name="Armstrong J."/>
            <person name="Belter E.A."/>
            <person name="Caruso L."/>
            <person name="Cedroni M."/>
            <person name="Cotton M."/>
            <person name="Davidson T."/>
            <person name="Desai A."/>
            <person name="Elliott G."/>
            <person name="Erb T."/>
            <person name="Fronick C."/>
            <person name="Gaige T."/>
            <person name="Haakenson W."/>
            <person name="Haglund K."/>
            <person name="Holmes A."/>
            <person name="Harkins R."/>
            <person name="Kim K."/>
            <person name="Kruchowski S.S."/>
            <person name="Strong C.M."/>
            <person name="Grewal N."/>
            <person name="Goyea E."/>
            <person name="Hou S."/>
            <person name="Levy A."/>
            <person name="Martinka S."/>
            <person name="Mead K."/>
            <person name="McLellan M.D."/>
            <person name="Meyer R."/>
            <person name="Randall-Maher J."/>
            <person name="Tomlinson C."/>
            <person name="Dauphin-Kohlberg S."/>
            <person name="Kozlowicz-Reilly A."/>
            <person name="Shah N."/>
            <person name="Swearengen-Shahid S."/>
            <person name="Snider J."/>
            <person name="Strong J.T."/>
            <person name="Thompson J."/>
            <person name="Yoakum M."/>
            <person name="Leonard S."/>
            <person name="Pearman C."/>
            <person name="Trani L."/>
            <person name="Radionenko M."/>
            <person name="Waligorski J.E."/>
            <person name="Wang C."/>
            <person name="Rock S.M."/>
            <person name="Tin-Wollam A.-M."/>
            <person name="Maupin R."/>
            <person name="Latreille P."/>
            <person name="Wendl M.C."/>
            <person name="Yang S.-P."/>
            <person name="Pohl C."/>
            <person name="Wallis J.W."/>
            <person name="Spieth J."/>
            <person name="Bieri T.A."/>
            <person name="Berkowicz N."/>
            <person name="Nelson J.O."/>
            <person name="Osborne J."/>
            <person name="Ding L."/>
            <person name="Meyer R."/>
            <person name="Sabo A."/>
            <person name="Shotland Y."/>
            <person name="Sinha P."/>
            <person name="Wohldmann P.E."/>
            <person name="Cook L.L."/>
            <person name="Hickenbotham M.T."/>
            <person name="Eldred J."/>
            <person name="Williams D."/>
            <person name="Jones T.A."/>
            <person name="She X."/>
            <person name="Ciccarelli F.D."/>
            <person name="Izaurralde E."/>
            <person name="Taylor J."/>
            <person name="Schmutz J."/>
            <person name="Myers R.M."/>
            <person name="Cox D.R."/>
            <person name="Huang X."/>
            <person name="McPherson J.D."/>
            <person name="Mardis E.R."/>
            <person name="Clifton S.W."/>
            <person name="Warren W.C."/>
            <person name="Chinwalla A.T."/>
            <person name="Eddy S.R."/>
            <person name="Marra M.A."/>
            <person name="Ovcharenko I."/>
            <person name="Furey T.S."/>
            <person name="Miller W."/>
            <person name="Eichler E.E."/>
            <person name="Bork P."/>
            <person name="Suyama M."/>
            <person name="Torrents D."/>
            <person name="Waterston R.H."/>
            <person name="Wilson R.K."/>
        </authorList>
    </citation>
    <scope>NUCLEOTIDE SEQUENCE [LARGE SCALE GENOMIC DNA]</scope>
</reference>
<reference key="3">
    <citation type="submission" date="2005-07" db="EMBL/GenBank/DDBJ databases">
        <authorList>
            <person name="Mural R.J."/>
            <person name="Istrail S."/>
            <person name="Sutton G.G."/>
            <person name="Florea L."/>
            <person name="Halpern A.L."/>
            <person name="Mobarry C.M."/>
            <person name="Lippert R."/>
            <person name="Walenz B."/>
            <person name="Shatkay H."/>
            <person name="Dew I."/>
            <person name="Miller J.R."/>
            <person name="Flanigan M.J."/>
            <person name="Edwards N.J."/>
            <person name="Bolanos R."/>
            <person name="Fasulo D."/>
            <person name="Halldorsson B.V."/>
            <person name="Hannenhalli S."/>
            <person name="Turner R."/>
            <person name="Yooseph S."/>
            <person name="Lu F."/>
            <person name="Nusskern D.R."/>
            <person name="Shue B.C."/>
            <person name="Zheng X.H."/>
            <person name="Zhong F."/>
            <person name="Delcher A.L."/>
            <person name="Huson D.H."/>
            <person name="Kravitz S.A."/>
            <person name="Mouchard L."/>
            <person name="Reinert K."/>
            <person name="Remington K.A."/>
            <person name="Clark A.G."/>
            <person name="Waterman M.S."/>
            <person name="Eichler E.E."/>
            <person name="Adams M.D."/>
            <person name="Hunkapiller M.W."/>
            <person name="Myers E.W."/>
            <person name="Venter J.C."/>
        </authorList>
    </citation>
    <scope>NUCLEOTIDE SEQUENCE [LARGE SCALE GENOMIC DNA]</scope>
</reference>
<reference key="4">
    <citation type="journal article" date="2004" name="Genome Res.">
        <title>The status, quality, and expansion of the NIH full-length cDNA project: the Mammalian Gene Collection (MGC).</title>
        <authorList>
            <consortium name="The MGC Project Team"/>
        </authorList>
    </citation>
    <scope>NUCLEOTIDE SEQUENCE [LARGE SCALE MRNA] (ISOFORM 1)</scope>
    <source>
        <tissue>Skin</tissue>
    </source>
</reference>
<reference key="5">
    <citation type="journal article" date="2001" name="Yeast">
        <title>Characterization of 16 novel human genes showing high similarity to yeast sequences.</title>
        <authorList>
            <person name="Stanchi F."/>
            <person name="Bertocco E."/>
            <person name="Toppo S."/>
            <person name="Dioguardi R."/>
            <person name="Simionati B."/>
            <person name="Cannata N."/>
            <person name="Zimbello R."/>
            <person name="Lanfranchi G."/>
            <person name="Valle G."/>
        </authorList>
    </citation>
    <scope>NUCLEOTIDE SEQUENCE [MRNA] OF 260-372 (ISOFORM 1)</scope>
</reference>
<reference key="6">
    <citation type="journal article" date="2011" name="Am. J. Hum. Genet.">
        <title>Lipoic acid synthetase deficiency causes neonatal-onset epilepsy, defective mitochondrial energy metabolism, and glycine elevation.</title>
        <authorList>
            <person name="Mayr J.A."/>
            <person name="Zimmermann F.A."/>
            <person name="Fauth C."/>
            <person name="Bergheim C."/>
            <person name="Meierhofer D."/>
            <person name="Radmayr D."/>
            <person name="Zschocke J."/>
            <person name="Koch J."/>
            <person name="Sperl W."/>
        </authorList>
    </citation>
    <scope>VARIANT HGCLAS HIS-249</scope>
</reference>
<comment type="function">
    <text evidence="1">Catalyzes the radical-mediated insertion of two sulfur atoms into the C-6 and C-8 positions of the octanoyl moiety bound to the lipoyl domains of lipoate-dependent enzymes, thereby converting the octanoylated domains into lipoylated derivatives.</text>
</comment>
<comment type="catalytic activity">
    <reaction evidence="1">
        <text>[[Fe-S] cluster scaffold protein carrying a second [4Fe-4S](2+) cluster] + N(6)-octanoyl-L-lysyl-[protein] + 2 oxidized [2Fe-2S]-[ferredoxin] + 2 S-adenosyl-L-methionine + 4 H(+) = [[Fe-S] cluster scaffold protein] + N(6)-[(R)-dihydrolipoyl]-L-lysyl-[protein] + 4 Fe(3+) + 2 hydrogen sulfide + 2 5'-deoxyadenosine + 2 L-methionine + 2 reduced [2Fe-2S]-[ferredoxin]</text>
        <dbReference type="Rhea" id="RHEA:16585"/>
        <dbReference type="Rhea" id="RHEA-COMP:9928"/>
        <dbReference type="Rhea" id="RHEA-COMP:10000"/>
        <dbReference type="Rhea" id="RHEA-COMP:10001"/>
        <dbReference type="Rhea" id="RHEA-COMP:10475"/>
        <dbReference type="Rhea" id="RHEA-COMP:14568"/>
        <dbReference type="Rhea" id="RHEA-COMP:14569"/>
        <dbReference type="ChEBI" id="CHEBI:15378"/>
        <dbReference type="ChEBI" id="CHEBI:17319"/>
        <dbReference type="ChEBI" id="CHEBI:29034"/>
        <dbReference type="ChEBI" id="CHEBI:29919"/>
        <dbReference type="ChEBI" id="CHEBI:33722"/>
        <dbReference type="ChEBI" id="CHEBI:33737"/>
        <dbReference type="ChEBI" id="CHEBI:33738"/>
        <dbReference type="ChEBI" id="CHEBI:57844"/>
        <dbReference type="ChEBI" id="CHEBI:59789"/>
        <dbReference type="ChEBI" id="CHEBI:78809"/>
        <dbReference type="ChEBI" id="CHEBI:83100"/>
        <dbReference type="EC" id="2.8.1.8"/>
    </reaction>
</comment>
<comment type="cofactor">
    <cofactor evidence="1">
        <name>[4Fe-4S] cluster</name>
        <dbReference type="ChEBI" id="CHEBI:49883"/>
    </cofactor>
    <text evidence="1">Binds 2 [4Fe-4S] clusters per subunit. One cluster is coordinated with 3 cysteines and an exchangeable S-adenosyl-L-methionine.</text>
</comment>
<comment type="pathway">
    <text evidence="1">Protein modification; protein lipoylation via endogenous pathway; protein N(6)-(lipoyl)lysine from octanoyl-[acyl-carrier-protein]: step 2/2.</text>
</comment>
<comment type="subcellular location">
    <subcellularLocation>
        <location evidence="1">Mitochondrion</location>
    </subcellularLocation>
</comment>
<comment type="alternative products">
    <event type="alternative splicing"/>
    <isoform>
        <id>O43766-1</id>
        <name>1</name>
        <sequence type="displayed"/>
    </isoform>
    <isoform>
        <id>O43766-2</id>
        <name>2</name>
        <sequence type="described" ref="VSP_047380 VSP_047381"/>
    </isoform>
    <isoform>
        <id>O43766-3</id>
        <name>3</name>
        <sequence type="described" ref="VSP_054764"/>
    </isoform>
</comment>
<comment type="disease" evidence="3">
    <disease id="DI-03379">
        <name>Hyperglycinemia, lactic acidosis, and seizures</name>
        <acronym>HGCLAS</acronym>
        <description>An enzymatic defect resulting in an autosomal recessive disorder of mitochondrial metabolism. It is characterized by early-onset lactic acidosis, severe encephalomyopathy, and a pyruvate oxidation defect. Affected individuals have neonatal-onset epilepsy, poor growth, psychomotor retardation, muscular hypotonia, lactic acidosis, and elevated glycine concentration in plasma and urine.</description>
        <dbReference type="MIM" id="614462"/>
    </disease>
    <text>The disease is caused by variants affecting the gene represented in this entry.</text>
</comment>
<comment type="similarity">
    <text evidence="1">Belongs to the radical SAM superfamily. Lipoyl synthase family.</text>
</comment>
<proteinExistence type="evidence at protein level"/>
<feature type="transit peptide" description="Mitochondrion" evidence="1">
    <location>
        <begin position="1"/>
        <end position="27"/>
    </location>
</feature>
<feature type="chain" id="PRO_0000017723" description="Lipoyl synthase, mitochondrial">
    <location>
        <begin position="28"/>
        <end position="372"/>
    </location>
</feature>
<feature type="domain" description="Radical SAM core" evidence="2">
    <location>
        <begin position="122"/>
        <end position="341"/>
    </location>
</feature>
<feature type="binding site" evidence="1">
    <location>
        <position position="106"/>
    </location>
    <ligand>
        <name>[4Fe-4S] cluster</name>
        <dbReference type="ChEBI" id="CHEBI:49883"/>
        <label>1</label>
    </ligand>
</feature>
<feature type="binding site" evidence="1">
    <location>
        <position position="111"/>
    </location>
    <ligand>
        <name>[4Fe-4S] cluster</name>
        <dbReference type="ChEBI" id="CHEBI:49883"/>
        <label>1</label>
    </ligand>
</feature>
<feature type="binding site" evidence="1">
    <location>
        <position position="117"/>
    </location>
    <ligand>
        <name>[4Fe-4S] cluster</name>
        <dbReference type="ChEBI" id="CHEBI:49883"/>
        <label>1</label>
    </ligand>
</feature>
<feature type="binding site" evidence="1">
    <location>
        <position position="137"/>
    </location>
    <ligand>
        <name>[4Fe-4S] cluster</name>
        <dbReference type="ChEBI" id="CHEBI:49883"/>
        <label>2</label>
        <note>4Fe-4S-S-AdoMet</note>
    </ligand>
</feature>
<feature type="binding site" evidence="1">
    <location>
        <position position="141"/>
    </location>
    <ligand>
        <name>[4Fe-4S] cluster</name>
        <dbReference type="ChEBI" id="CHEBI:49883"/>
        <label>2</label>
        <note>4Fe-4S-S-AdoMet</note>
    </ligand>
</feature>
<feature type="binding site" evidence="1">
    <location>
        <position position="144"/>
    </location>
    <ligand>
        <name>[4Fe-4S] cluster</name>
        <dbReference type="ChEBI" id="CHEBI:49883"/>
        <label>2</label>
        <note>4Fe-4S-S-AdoMet</note>
    </ligand>
</feature>
<feature type="binding site" evidence="1">
    <location>
        <position position="352"/>
    </location>
    <ligand>
        <name>[4Fe-4S] cluster</name>
        <dbReference type="ChEBI" id="CHEBI:49883"/>
        <label>1</label>
    </ligand>
</feature>
<feature type="splice variant" id="VSP_054764" description="In isoform 3." evidence="4">
    <location>
        <begin position="203"/>
        <end position="245"/>
    </location>
</feature>
<feature type="splice variant" id="VSP_047380" description="In isoform 2." evidence="4">
    <original>EEY</original>
    <variation>NFS</variation>
    <location>
        <begin position="320"/>
        <end position="322"/>
    </location>
</feature>
<feature type="splice variant" id="VSP_047381" description="In isoform 2." evidence="4">
    <location>
        <begin position="323"/>
        <end position="372"/>
    </location>
</feature>
<feature type="sequence variant" id="VAR_067839" description="In HGCLAS; dbSNP:rs144133667." evidence="3">
    <original>R</original>
    <variation>H</variation>
    <location>
        <position position="249"/>
    </location>
</feature>
<feature type="sequence conflict" description="In Ref. 4; AAH23635." evidence="4" ref="4">
    <original>A</original>
    <variation>V</variation>
    <location>
        <position position="253"/>
    </location>
</feature>
<feature type="sequence conflict" description="In Ref. 5; CAA11859." evidence="4" ref="5">
    <original>R</original>
    <variation>G</variation>
    <location>
        <position position="260"/>
    </location>
</feature>
<sequence length="372" mass="41911">MSLRCGDAARTLGPRVFGRYFCSPVRPLSSLPDKKKELLQNGPDLQDFVSGDLADRSTWDEYKGNLKRQKGERLRLPPWLKTEIPMGKNYNKLKNTLRNLNLHTVCEEARCPNIGECWGGGEYATATATIMLMGDTCTRGCRFCSVKTARNPPPLDASEPYNTAKAIAEWGLDYVVLTSVDRDDMPDGGAEHIAKTVSYLKERNPKILVECLTPDFRGDLKAIEKVALSGLDVYAHNVETVPELQSKVRDPRANFDQSLRVLKHAKKVQPDVISKTSIMLGLGENDEQVYATMKALREADVDCLTLGQYMQPTRRHLKVEEYITPEKFKYWEKVGNELGFHYTASGPLVRSSYKAGEFFLKNLVAKRKTKDL</sequence>
<gene>
    <name evidence="1" type="primary">LIAS</name>
    <name type="synonym">LAS</name>
    <name type="ORF">HUSSY-01</name>
</gene>
<keyword id="KW-0004">4Fe-4S</keyword>
<keyword id="KW-0025">Alternative splicing</keyword>
<keyword id="KW-0225">Disease variant</keyword>
<keyword id="KW-0408">Iron</keyword>
<keyword id="KW-0411">Iron-sulfur</keyword>
<keyword id="KW-0479">Metal-binding</keyword>
<keyword id="KW-0496">Mitochondrion</keyword>
<keyword id="KW-1267">Proteomics identification</keyword>
<keyword id="KW-1185">Reference proteome</keyword>
<keyword id="KW-0949">S-adenosyl-L-methionine</keyword>
<keyword id="KW-0808">Transferase</keyword>
<keyword id="KW-0809">Transit peptide</keyword>
<name>LIAS_HUMAN</name>
<dbReference type="EC" id="2.8.1.8" evidence="1"/>
<dbReference type="EMBL" id="AK292238">
    <property type="protein sequence ID" value="BAF84927.1"/>
    <property type="molecule type" value="mRNA"/>
</dbReference>
<dbReference type="EMBL" id="AC021148">
    <property type="status" value="NOT_ANNOTATED_CDS"/>
    <property type="molecule type" value="Genomic_DNA"/>
</dbReference>
<dbReference type="EMBL" id="CH471069">
    <property type="protein sequence ID" value="EAW92932.1"/>
    <property type="molecule type" value="Genomic_DNA"/>
</dbReference>
<dbReference type="EMBL" id="BC023635">
    <property type="protein sequence ID" value="AAH23635.1"/>
    <property type="molecule type" value="mRNA"/>
</dbReference>
<dbReference type="EMBL" id="AJ224162">
    <property type="protein sequence ID" value="CAA11859.1"/>
    <property type="molecule type" value="mRNA"/>
</dbReference>
<dbReference type="CCDS" id="CCDS3453.1">
    <molecule id="O43766-1"/>
</dbReference>
<dbReference type="CCDS" id="CCDS3454.1">
    <molecule id="O43766-2"/>
</dbReference>
<dbReference type="CCDS" id="CCDS63950.1">
    <molecule id="O43766-3"/>
</dbReference>
<dbReference type="RefSeq" id="NP_001265519.1">
    <molecule id="O43766-3"/>
    <property type="nucleotide sequence ID" value="NM_001278590.2"/>
</dbReference>
<dbReference type="RefSeq" id="NP_001265520.1">
    <property type="nucleotide sequence ID" value="NM_001278591.1"/>
</dbReference>
<dbReference type="RefSeq" id="NP_001265521.1">
    <property type="nucleotide sequence ID" value="NM_001278592.1"/>
</dbReference>
<dbReference type="RefSeq" id="NP_006850.2">
    <molecule id="O43766-1"/>
    <property type="nucleotide sequence ID" value="NM_006859.3"/>
</dbReference>
<dbReference type="RefSeq" id="NP_919433.1">
    <molecule id="O43766-2"/>
    <property type="nucleotide sequence ID" value="NM_194451.3"/>
</dbReference>
<dbReference type="SMR" id="O43766"/>
<dbReference type="BioGRID" id="116209">
    <property type="interactions" value="39"/>
</dbReference>
<dbReference type="FunCoup" id="O43766">
    <property type="interactions" value="1957"/>
</dbReference>
<dbReference type="IntAct" id="O43766">
    <property type="interactions" value="12"/>
</dbReference>
<dbReference type="MINT" id="O43766"/>
<dbReference type="STRING" id="9606.ENSP00000492260"/>
<dbReference type="DrugBank" id="DB00166">
    <property type="generic name" value="Lipoic acid"/>
</dbReference>
<dbReference type="iPTMnet" id="O43766"/>
<dbReference type="PhosphoSitePlus" id="O43766"/>
<dbReference type="BioMuta" id="LIAS"/>
<dbReference type="jPOST" id="O43766"/>
<dbReference type="MassIVE" id="O43766"/>
<dbReference type="PaxDb" id="9606-ENSP00000261434"/>
<dbReference type="PeptideAtlas" id="O43766"/>
<dbReference type="ProteomicsDB" id="49157">
    <molecule id="O43766-1"/>
</dbReference>
<dbReference type="ProteomicsDB" id="9588"/>
<dbReference type="Pumba" id="O43766"/>
<dbReference type="TopDownProteomics" id="O43766-2">
    <molecule id="O43766-2"/>
</dbReference>
<dbReference type="Antibodypedia" id="11693">
    <property type="antibodies" value="119 antibodies from 24 providers"/>
</dbReference>
<dbReference type="DNASU" id="11019"/>
<dbReference type="Ensembl" id="ENST00000340169.7">
    <molecule id="O43766-2"/>
    <property type="protein sequence ID" value="ENSP00000340676.2"/>
    <property type="gene ID" value="ENSG00000121897.15"/>
</dbReference>
<dbReference type="Ensembl" id="ENST00000381846.2">
    <molecule id="O43766-3"/>
    <property type="protein sequence ID" value="ENSP00000371270.1"/>
    <property type="gene ID" value="ENSG00000121897.15"/>
</dbReference>
<dbReference type="Ensembl" id="ENST00000640888.2">
    <molecule id="O43766-1"/>
    <property type="protein sequence ID" value="ENSP00000492260.1"/>
    <property type="gene ID" value="ENSG00000121897.15"/>
</dbReference>
<dbReference type="GeneID" id="11019"/>
<dbReference type="KEGG" id="hsa:11019"/>
<dbReference type="MANE-Select" id="ENST00000640888.2">
    <property type="protein sequence ID" value="ENSP00000492260.1"/>
    <property type="RefSeq nucleotide sequence ID" value="NM_006859.4"/>
    <property type="RefSeq protein sequence ID" value="NP_006850.2"/>
</dbReference>
<dbReference type="UCSC" id="uc003guf.5">
    <molecule id="O43766-1"/>
    <property type="organism name" value="human"/>
</dbReference>
<dbReference type="AGR" id="HGNC:16429"/>
<dbReference type="CTD" id="11019"/>
<dbReference type="DisGeNET" id="11019"/>
<dbReference type="GeneCards" id="LIAS"/>
<dbReference type="HGNC" id="HGNC:16429">
    <property type="gene designation" value="LIAS"/>
</dbReference>
<dbReference type="HPA" id="ENSG00000121897">
    <property type="expression patterns" value="Low tissue specificity"/>
</dbReference>
<dbReference type="MalaCards" id="LIAS"/>
<dbReference type="MIM" id="607031">
    <property type="type" value="gene"/>
</dbReference>
<dbReference type="MIM" id="614462">
    <property type="type" value="phenotype"/>
</dbReference>
<dbReference type="neXtProt" id="NX_O43766"/>
<dbReference type="OpenTargets" id="ENSG00000121897"/>
<dbReference type="Orphanet" id="401859">
    <property type="disease" value="Lipoic acid synthetase deficiency"/>
</dbReference>
<dbReference type="PharmGKB" id="PA30369"/>
<dbReference type="VEuPathDB" id="HostDB:ENSG00000121897"/>
<dbReference type="eggNOG" id="KOG2672">
    <property type="taxonomic scope" value="Eukaryota"/>
</dbReference>
<dbReference type="GeneTree" id="ENSGT00390000006234"/>
<dbReference type="HOGENOM" id="CLU_033144_2_0_1"/>
<dbReference type="InParanoid" id="O43766"/>
<dbReference type="OMA" id="PYCDIDF"/>
<dbReference type="OrthoDB" id="3231at2759"/>
<dbReference type="PAN-GO" id="O43766">
    <property type="GO annotations" value="3 GO annotations based on evolutionary models"/>
</dbReference>
<dbReference type="PhylomeDB" id="O43766"/>
<dbReference type="TreeFam" id="TF300817"/>
<dbReference type="BioCyc" id="MetaCyc:HS04528-MONOMER"/>
<dbReference type="PathwayCommons" id="O43766"/>
<dbReference type="Reactome" id="R-HSA-9857492">
    <property type="pathway name" value="Protein lipoylation"/>
</dbReference>
<dbReference type="SignaLink" id="O43766"/>
<dbReference type="UniPathway" id="UPA00538">
    <property type="reaction ID" value="UER00593"/>
</dbReference>
<dbReference type="BioGRID-ORCS" id="11019">
    <property type="hits" value="298 hits in 1158 CRISPR screens"/>
</dbReference>
<dbReference type="ChiTaRS" id="LIAS">
    <property type="organism name" value="human"/>
</dbReference>
<dbReference type="GenomeRNAi" id="11019"/>
<dbReference type="Pharos" id="O43766">
    <property type="development level" value="Tbio"/>
</dbReference>
<dbReference type="PRO" id="PR:O43766"/>
<dbReference type="Proteomes" id="UP000005640">
    <property type="component" value="Chromosome 4"/>
</dbReference>
<dbReference type="RNAct" id="O43766">
    <property type="molecule type" value="protein"/>
</dbReference>
<dbReference type="Bgee" id="ENSG00000121897">
    <property type="expression patterns" value="Expressed in primordial germ cell in gonad and 173 other cell types or tissues"/>
</dbReference>
<dbReference type="ExpressionAtlas" id="O43766">
    <property type="expression patterns" value="baseline and differential"/>
</dbReference>
<dbReference type="GO" id="GO:0005759">
    <property type="term" value="C:mitochondrial matrix"/>
    <property type="evidence" value="ECO:0000304"/>
    <property type="project" value="Reactome"/>
</dbReference>
<dbReference type="GO" id="GO:0005739">
    <property type="term" value="C:mitochondrion"/>
    <property type="evidence" value="ECO:0006056"/>
    <property type="project" value="FlyBase"/>
</dbReference>
<dbReference type="GO" id="GO:0051539">
    <property type="term" value="F:4 iron, 4 sulfur cluster binding"/>
    <property type="evidence" value="ECO:0007669"/>
    <property type="project" value="UniProtKB-UniRule"/>
</dbReference>
<dbReference type="GO" id="GO:0016992">
    <property type="term" value="F:lipoate synthase activity"/>
    <property type="evidence" value="ECO:0000250"/>
    <property type="project" value="UniProtKB"/>
</dbReference>
<dbReference type="GO" id="GO:0046872">
    <property type="term" value="F:metal ion binding"/>
    <property type="evidence" value="ECO:0007669"/>
    <property type="project" value="UniProtKB-KW"/>
</dbReference>
<dbReference type="GO" id="GO:0006954">
    <property type="term" value="P:inflammatory response"/>
    <property type="evidence" value="ECO:0000250"/>
    <property type="project" value="UniProtKB"/>
</dbReference>
<dbReference type="GO" id="GO:0009107">
    <property type="term" value="P:lipoate biosynthetic process"/>
    <property type="evidence" value="ECO:0000250"/>
    <property type="project" value="UniProtKB"/>
</dbReference>
<dbReference type="GO" id="GO:0001843">
    <property type="term" value="P:neural tube closure"/>
    <property type="evidence" value="ECO:0007669"/>
    <property type="project" value="Ensembl"/>
</dbReference>
<dbReference type="GO" id="GO:0032496">
    <property type="term" value="P:response to lipopolysaccharide"/>
    <property type="evidence" value="ECO:0000250"/>
    <property type="project" value="UniProtKB"/>
</dbReference>
<dbReference type="GO" id="GO:0006979">
    <property type="term" value="P:response to oxidative stress"/>
    <property type="evidence" value="ECO:0000250"/>
    <property type="project" value="UniProtKB"/>
</dbReference>
<dbReference type="CDD" id="cd01335">
    <property type="entry name" value="Radical_SAM"/>
    <property type="match status" value="1"/>
</dbReference>
<dbReference type="FunFam" id="3.20.20.70:FF:000036">
    <property type="entry name" value="Lipoyl synthase, mitochondrial"/>
    <property type="match status" value="1"/>
</dbReference>
<dbReference type="Gene3D" id="3.20.20.70">
    <property type="entry name" value="Aldolase class I"/>
    <property type="match status" value="1"/>
</dbReference>
<dbReference type="HAMAP" id="MF_00206">
    <property type="entry name" value="Lipoyl_synth"/>
    <property type="match status" value="1"/>
</dbReference>
<dbReference type="InterPro" id="IPR013785">
    <property type="entry name" value="Aldolase_TIM"/>
</dbReference>
<dbReference type="InterPro" id="IPR006638">
    <property type="entry name" value="Elp3/MiaA/NifB-like_rSAM"/>
</dbReference>
<dbReference type="InterPro" id="IPR031691">
    <property type="entry name" value="LIAS_N"/>
</dbReference>
<dbReference type="InterPro" id="IPR003698">
    <property type="entry name" value="Lipoyl_synth"/>
</dbReference>
<dbReference type="InterPro" id="IPR007197">
    <property type="entry name" value="rSAM"/>
</dbReference>
<dbReference type="NCBIfam" id="TIGR00510">
    <property type="entry name" value="lipA"/>
    <property type="match status" value="1"/>
</dbReference>
<dbReference type="NCBIfam" id="NF004019">
    <property type="entry name" value="PRK05481.1"/>
    <property type="match status" value="1"/>
</dbReference>
<dbReference type="NCBIfam" id="NF009544">
    <property type="entry name" value="PRK12928.1"/>
    <property type="match status" value="1"/>
</dbReference>
<dbReference type="PANTHER" id="PTHR10949">
    <property type="entry name" value="LIPOYL SYNTHASE"/>
    <property type="match status" value="1"/>
</dbReference>
<dbReference type="PANTHER" id="PTHR10949:SF0">
    <property type="entry name" value="LIPOYL SYNTHASE, MITOCHONDRIAL"/>
    <property type="match status" value="1"/>
</dbReference>
<dbReference type="Pfam" id="PF16881">
    <property type="entry name" value="LIAS_N"/>
    <property type="match status" value="1"/>
</dbReference>
<dbReference type="Pfam" id="PF04055">
    <property type="entry name" value="Radical_SAM"/>
    <property type="match status" value="1"/>
</dbReference>
<dbReference type="PIRSF" id="PIRSF005963">
    <property type="entry name" value="Lipoyl_synth"/>
    <property type="match status" value="1"/>
</dbReference>
<dbReference type="SFLD" id="SFLDF00271">
    <property type="entry name" value="lipoyl_synthase"/>
    <property type="match status" value="1"/>
</dbReference>
<dbReference type="SFLD" id="SFLDS00029">
    <property type="entry name" value="Radical_SAM"/>
    <property type="match status" value="1"/>
</dbReference>
<dbReference type="SMART" id="SM00729">
    <property type="entry name" value="Elp3"/>
    <property type="match status" value="1"/>
</dbReference>
<dbReference type="SUPFAM" id="SSF102114">
    <property type="entry name" value="Radical SAM enzymes"/>
    <property type="match status" value="1"/>
</dbReference>
<dbReference type="PROSITE" id="PS51918">
    <property type="entry name" value="RADICAL_SAM"/>
    <property type="match status" value="1"/>
</dbReference>